<feature type="chain" id="PRO_0000381979" description="Uncharacterized protein YjeV">
    <location>
        <begin position="1"/>
        <end position="17"/>
    </location>
</feature>
<protein>
    <recommendedName>
        <fullName>Uncharacterized protein YjeV</fullName>
    </recommendedName>
</protein>
<keyword id="KW-1185">Reference proteome</keyword>
<evidence type="ECO:0000269" key="1">
    <source>
    </source>
</evidence>
<reference key="1">
    <citation type="journal article" date="1997" name="Science">
        <title>The complete genome sequence of Escherichia coli K-12.</title>
        <authorList>
            <person name="Blattner F.R."/>
            <person name="Plunkett G. III"/>
            <person name="Bloch C.A."/>
            <person name="Perna N.T."/>
            <person name="Burland V."/>
            <person name="Riley M."/>
            <person name="Collado-Vides J."/>
            <person name="Glasner J.D."/>
            <person name="Rode C.K."/>
            <person name="Mayhew G.F."/>
            <person name="Gregor J."/>
            <person name="Davis N.W."/>
            <person name="Kirkpatrick H.A."/>
            <person name="Goeden M.A."/>
            <person name="Rose D.J."/>
            <person name="Mau B."/>
            <person name="Shao Y."/>
        </authorList>
    </citation>
    <scope>NUCLEOTIDE SEQUENCE [LARGE SCALE GENOMIC DNA]</scope>
    <source>
        <strain>K12 / MG1655 / ATCC 47076</strain>
    </source>
</reference>
<reference key="2">
    <citation type="journal article" date="2006" name="Mol. Syst. Biol.">
        <title>Highly accurate genome sequences of Escherichia coli K-12 strains MG1655 and W3110.</title>
        <authorList>
            <person name="Hayashi K."/>
            <person name="Morooka N."/>
            <person name="Yamamoto Y."/>
            <person name="Fujita K."/>
            <person name="Isono K."/>
            <person name="Choi S."/>
            <person name="Ohtsubo E."/>
            <person name="Baba T."/>
            <person name="Wanner B.L."/>
            <person name="Mori H."/>
            <person name="Horiuchi T."/>
        </authorList>
    </citation>
    <scope>NUCLEOTIDE SEQUENCE [LARGE SCALE GENOMIC DNA]</scope>
    <source>
        <strain>K12 / W3110 / ATCC 27325 / DSM 5911</strain>
    </source>
</reference>
<reference key="3">
    <citation type="journal article" date="2008" name="Mol. Microbiol.">
        <title>Small membrane proteins found by comparative genomics and ribosome binding site models.</title>
        <authorList>
            <person name="Hemm M.R."/>
            <person name="Paul B.J."/>
            <person name="Schneider T.D."/>
            <person name="Storz G."/>
            <person name="Rudd K.E."/>
        </authorList>
    </citation>
    <scope>IDENTIFICATION</scope>
    <scope>INDUCTION</scope>
    <source>
        <strain>K12 / MG1655 / ATCC 47076</strain>
    </source>
</reference>
<dbReference type="EMBL" id="U00096">
    <property type="protein sequence ID" value="ACO60013.1"/>
    <property type="molecule type" value="Genomic_DNA"/>
</dbReference>
<dbReference type="EMBL" id="AP009048">
    <property type="status" value="NOT_ANNOTATED_CDS"/>
    <property type="molecule type" value="Genomic_DNA"/>
</dbReference>
<dbReference type="RefSeq" id="WP_010723271.1">
    <property type="nucleotide sequence ID" value="NZ_STEB01000013.1"/>
</dbReference>
<dbReference type="RefSeq" id="YP_002791261.1">
    <property type="nucleotide sequence ID" value="NC_000913.3"/>
</dbReference>
<dbReference type="FunCoup" id="C1P621">
    <property type="interactions" value="1"/>
</dbReference>
<dbReference type="STRING" id="511145.b4670"/>
<dbReference type="EnsemblBacteria" id="ACO60013">
    <property type="protein sequence ID" value="ACO60013"/>
    <property type="gene ID" value="b4670"/>
</dbReference>
<dbReference type="GeneID" id="7751630"/>
<dbReference type="KEGG" id="eco:b4670"/>
<dbReference type="InParanoid" id="C1P621"/>
<dbReference type="BioCyc" id="EcoCyc:MONOMER0-2869"/>
<dbReference type="PRO" id="PR:C1P621"/>
<dbReference type="Proteomes" id="UP000000625">
    <property type="component" value="Chromosome"/>
</dbReference>
<organism>
    <name type="scientific">Escherichia coli (strain K12)</name>
    <dbReference type="NCBI Taxonomy" id="83333"/>
    <lineage>
        <taxon>Bacteria</taxon>
        <taxon>Pseudomonadati</taxon>
        <taxon>Pseudomonadota</taxon>
        <taxon>Gammaproteobacteria</taxon>
        <taxon>Enterobacterales</taxon>
        <taxon>Enterobacteriaceae</taxon>
        <taxon>Escherichia</taxon>
    </lineage>
</organism>
<sequence length="17" mass="2056">MRFYFYSQAVDESGVTR</sequence>
<name>YJEV_ECOLI</name>
<accession>C1P621</accession>
<comment type="induction">
    <text evidence="1">In exponential phase (at protein level).</text>
</comment>
<gene>
    <name type="primary">yjeV</name>
    <name type="ordered locus">b4670</name>
    <name type="ordered locus">JW5740.1</name>
</gene>
<proteinExistence type="evidence at protein level"/>